<protein>
    <recommendedName>
        <fullName evidence="1">Large ribosomal subunit protein uL5</fullName>
    </recommendedName>
    <alternativeName>
        <fullName evidence="2">50S ribosomal protein L5</fullName>
    </alternativeName>
</protein>
<sequence>MAENYTPRLKSRYQDEIRPNLQTQFEFSNVMQIPGVTKVVVNMGVGDAARDSKMINGALEDLTAITGQKPQLRRAKKSIANFKLREGMPIGAKVTLRGDRMWEFLDRLLTVALPRIRDFRGLSDQQFDGHGNYTFGLTEQTMFYEIDVDKIDRPRGMDITVVTTAVTDDEGRALLRELGFPFKGEDGKKQ</sequence>
<dbReference type="EMBL" id="BA000035">
    <property type="protein sequence ID" value="BAC17345.1"/>
    <property type="molecule type" value="Genomic_DNA"/>
</dbReference>
<dbReference type="RefSeq" id="WP_006769792.1">
    <property type="nucleotide sequence ID" value="NC_004369.1"/>
</dbReference>
<dbReference type="SMR" id="Q8FS69"/>
<dbReference type="STRING" id="196164.gene:10740937"/>
<dbReference type="KEGG" id="cef:CE0535"/>
<dbReference type="eggNOG" id="COG0094">
    <property type="taxonomic scope" value="Bacteria"/>
</dbReference>
<dbReference type="HOGENOM" id="CLU_061015_2_1_11"/>
<dbReference type="OrthoDB" id="9806626at2"/>
<dbReference type="Proteomes" id="UP000001409">
    <property type="component" value="Chromosome"/>
</dbReference>
<dbReference type="GO" id="GO:1990904">
    <property type="term" value="C:ribonucleoprotein complex"/>
    <property type="evidence" value="ECO:0007669"/>
    <property type="project" value="UniProtKB-KW"/>
</dbReference>
<dbReference type="GO" id="GO:0005840">
    <property type="term" value="C:ribosome"/>
    <property type="evidence" value="ECO:0007669"/>
    <property type="project" value="UniProtKB-KW"/>
</dbReference>
<dbReference type="GO" id="GO:0019843">
    <property type="term" value="F:rRNA binding"/>
    <property type="evidence" value="ECO:0007669"/>
    <property type="project" value="UniProtKB-UniRule"/>
</dbReference>
<dbReference type="GO" id="GO:0003735">
    <property type="term" value="F:structural constituent of ribosome"/>
    <property type="evidence" value="ECO:0007669"/>
    <property type="project" value="InterPro"/>
</dbReference>
<dbReference type="GO" id="GO:0000049">
    <property type="term" value="F:tRNA binding"/>
    <property type="evidence" value="ECO:0007669"/>
    <property type="project" value="UniProtKB-UniRule"/>
</dbReference>
<dbReference type="GO" id="GO:0006412">
    <property type="term" value="P:translation"/>
    <property type="evidence" value="ECO:0007669"/>
    <property type="project" value="UniProtKB-UniRule"/>
</dbReference>
<dbReference type="FunFam" id="3.30.1440.10:FF:000001">
    <property type="entry name" value="50S ribosomal protein L5"/>
    <property type="match status" value="1"/>
</dbReference>
<dbReference type="Gene3D" id="3.30.1440.10">
    <property type="match status" value="1"/>
</dbReference>
<dbReference type="HAMAP" id="MF_01333_B">
    <property type="entry name" value="Ribosomal_uL5_B"/>
    <property type="match status" value="1"/>
</dbReference>
<dbReference type="InterPro" id="IPR002132">
    <property type="entry name" value="Ribosomal_uL5"/>
</dbReference>
<dbReference type="InterPro" id="IPR020930">
    <property type="entry name" value="Ribosomal_uL5_bac-type"/>
</dbReference>
<dbReference type="InterPro" id="IPR031309">
    <property type="entry name" value="Ribosomal_uL5_C"/>
</dbReference>
<dbReference type="InterPro" id="IPR022803">
    <property type="entry name" value="Ribosomal_uL5_dom_sf"/>
</dbReference>
<dbReference type="InterPro" id="IPR031310">
    <property type="entry name" value="Ribosomal_uL5_N"/>
</dbReference>
<dbReference type="NCBIfam" id="NF000585">
    <property type="entry name" value="PRK00010.1"/>
    <property type="match status" value="1"/>
</dbReference>
<dbReference type="PANTHER" id="PTHR11994">
    <property type="entry name" value="60S RIBOSOMAL PROTEIN L11-RELATED"/>
    <property type="match status" value="1"/>
</dbReference>
<dbReference type="Pfam" id="PF00281">
    <property type="entry name" value="Ribosomal_L5"/>
    <property type="match status" value="1"/>
</dbReference>
<dbReference type="Pfam" id="PF00673">
    <property type="entry name" value="Ribosomal_L5_C"/>
    <property type="match status" value="1"/>
</dbReference>
<dbReference type="PIRSF" id="PIRSF002161">
    <property type="entry name" value="Ribosomal_L5"/>
    <property type="match status" value="1"/>
</dbReference>
<dbReference type="SUPFAM" id="SSF55282">
    <property type="entry name" value="RL5-like"/>
    <property type="match status" value="1"/>
</dbReference>
<comment type="function">
    <text evidence="1">This is one of the proteins that bind and probably mediate the attachment of the 5S RNA into the large ribosomal subunit, where it forms part of the central protuberance. In the 70S ribosome it contacts protein S13 of the 30S subunit (bridge B1b), connecting the 2 subunits; this bridge is implicated in subunit movement. Contacts the P site tRNA; the 5S rRNA and some of its associated proteins might help stabilize positioning of ribosome-bound tRNAs.</text>
</comment>
<comment type="subunit">
    <text evidence="1">Part of the 50S ribosomal subunit; part of the 5S rRNA/L5/L18/L25 subcomplex. Contacts the 5S rRNA and the P site tRNA. Forms a bridge to the 30S subunit in the 70S ribosome.</text>
</comment>
<comment type="similarity">
    <text evidence="1">Belongs to the universal ribosomal protein uL5 family.</text>
</comment>
<feature type="chain" id="PRO_0000124920" description="Large ribosomal subunit protein uL5">
    <location>
        <begin position="1"/>
        <end position="190"/>
    </location>
</feature>
<name>RL5_COREF</name>
<reference key="1">
    <citation type="journal article" date="2003" name="Genome Res.">
        <title>Comparative complete genome sequence analysis of the amino acid replacements responsible for the thermostability of Corynebacterium efficiens.</title>
        <authorList>
            <person name="Nishio Y."/>
            <person name="Nakamura Y."/>
            <person name="Kawarabayasi Y."/>
            <person name="Usuda Y."/>
            <person name="Kimura E."/>
            <person name="Sugimoto S."/>
            <person name="Matsui K."/>
            <person name="Yamagishi A."/>
            <person name="Kikuchi H."/>
            <person name="Ikeo K."/>
            <person name="Gojobori T."/>
        </authorList>
    </citation>
    <scope>NUCLEOTIDE SEQUENCE [LARGE SCALE GENOMIC DNA]</scope>
    <source>
        <strain>DSM 44549 / YS-314 / AJ 12310 / JCM 11189 / NBRC 100395</strain>
    </source>
</reference>
<keyword id="KW-1185">Reference proteome</keyword>
<keyword id="KW-0687">Ribonucleoprotein</keyword>
<keyword id="KW-0689">Ribosomal protein</keyword>
<keyword id="KW-0694">RNA-binding</keyword>
<keyword id="KW-0699">rRNA-binding</keyword>
<keyword id="KW-0820">tRNA-binding</keyword>
<evidence type="ECO:0000255" key="1">
    <source>
        <dbReference type="HAMAP-Rule" id="MF_01333"/>
    </source>
</evidence>
<evidence type="ECO:0000305" key="2"/>
<gene>
    <name evidence="1" type="primary">rplE</name>
    <name type="ordered locus">CE0535</name>
</gene>
<organism>
    <name type="scientific">Corynebacterium efficiens (strain DSM 44549 / YS-314 / AJ 12310 / JCM 11189 / NBRC 100395)</name>
    <dbReference type="NCBI Taxonomy" id="196164"/>
    <lineage>
        <taxon>Bacteria</taxon>
        <taxon>Bacillati</taxon>
        <taxon>Actinomycetota</taxon>
        <taxon>Actinomycetes</taxon>
        <taxon>Mycobacteriales</taxon>
        <taxon>Corynebacteriaceae</taxon>
        <taxon>Corynebacterium</taxon>
    </lineage>
</organism>
<proteinExistence type="inferred from homology"/>
<accession>Q8FS69</accession>